<comment type="similarity">
    <text evidence="1">Belongs to the bacterial ribosomal protein bS16 family.</text>
</comment>
<keyword id="KW-0687">Ribonucleoprotein</keyword>
<keyword id="KW-0689">Ribosomal protein</keyword>
<sequence length="90" mass="10365">MAVKIRLKRIGSKKKPFYRIVVADSRFPRDGRSIETIGTYNPLLDPVEVKIDEEATLKWMHNGAKPSDTVRNLLSREGIMEKFHNQKLGK</sequence>
<gene>
    <name evidence="1" type="primary">rpsP</name>
    <name type="ordered locus">Lm4b_01813</name>
</gene>
<evidence type="ECO:0000255" key="1">
    <source>
        <dbReference type="HAMAP-Rule" id="MF_00385"/>
    </source>
</evidence>
<evidence type="ECO:0000305" key="2"/>
<proteinExistence type="inferred from homology"/>
<accession>C1KW96</accession>
<reference key="1">
    <citation type="journal article" date="2012" name="BMC Genomics">
        <title>Comparative genomics and transcriptomics of lineages I, II, and III strains of Listeria monocytogenes.</title>
        <authorList>
            <person name="Hain T."/>
            <person name="Ghai R."/>
            <person name="Billion A."/>
            <person name="Kuenne C.T."/>
            <person name="Steinweg C."/>
            <person name="Izar B."/>
            <person name="Mohamed W."/>
            <person name="Mraheil M."/>
            <person name="Domann E."/>
            <person name="Schaffrath S."/>
            <person name="Karst U."/>
            <person name="Goesmann A."/>
            <person name="Oehm S."/>
            <person name="Puhler A."/>
            <person name="Merkl R."/>
            <person name="Vorwerk S."/>
            <person name="Glaser P."/>
            <person name="Garrido P."/>
            <person name="Rusniok C."/>
            <person name="Buchrieser C."/>
            <person name="Goebel W."/>
            <person name="Chakraborty T."/>
        </authorList>
    </citation>
    <scope>NUCLEOTIDE SEQUENCE [LARGE SCALE GENOMIC DNA]</scope>
    <source>
        <strain>CLIP80459</strain>
    </source>
</reference>
<dbReference type="EMBL" id="FM242711">
    <property type="protein sequence ID" value="CAS05571.1"/>
    <property type="molecule type" value="Genomic_DNA"/>
</dbReference>
<dbReference type="RefSeq" id="WP_003720111.1">
    <property type="nucleotide sequence ID" value="NC_012488.1"/>
</dbReference>
<dbReference type="SMR" id="C1KW96"/>
<dbReference type="GeneID" id="93239707"/>
<dbReference type="KEGG" id="lmc:Lm4b_01813"/>
<dbReference type="HOGENOM" id="CLU_100590_5_0_9"/>
<dbReference type="GO" id="GO:0005737">
    <property type="term" value="C:cytoplasm"/>
    <property type="evidence" value="ECO:0007669"/>
    <property type="project" value="UniProtKB-ARBA"/>
</dbReference>
<dbReference type="GO" id="GO:0015935">
    <property type="term" value="C:small ribosomal subunit"/>
    <property type="evidence" value="ECO:0007669"/>
    <property type="project" value="TreeGrafter"/>
</dbReference>
<dbReference type="GO" id="GO:0003735">
    <property type="term" value="F:structural constituent of ribosome"/>
    <property type="evidence" value="ECO:0007669"/>
    <property type="project" value="InterPro"/>
</dbReference>
<dbReference type="GO" id="GO:0006412">
    <property type="term" value="P:translation"/>
    <property type="evidence" value="ECO:0007669"/>
    <property type="project" value="UniProtKB-UniRule"/>
</dbReference>
<dbReference type="FunFam" id="3.30.1320.10:FF:000002">
    <property type="entry name" value="30S ribosomal protein S16"/>
    <property type="match status" value="1"/>
</dbReference>
<dbReference type="Gene3D" id="3.30.1320.10">
    <property type="match status" value="1"/>
</dbReference>
<dbReference type="HAMAP" id="MF_00385">
    <property type="entry name" value="Ribosomal_bS16"/>
    <property type="match status" value="1"/>
</dbReference>
<dbReference type="InterPro" id="IPR000307">
    <property type="entry name" value="Ribosomal_bS16"/>
</dbReference>
<dbReference type="InterPro" id="IPR023803">
    <property type="entry name" value="Ribosomal_bS16_dom_sf"/>
</dbReference>
<dbReference type="NCBIfam" id="TIGR00002">
    <property type="entry name" value="S16"/>
    <property type="match status" value="1"/>
</dbReference>
<dbReference type="PANTHER" id="PTHR12919">
    <property type="entry name" value="30S RIBOSOMAL PROTEIN S16"/>
    <property type="match status" value="1"/>
</dbReference>
<dbReference type="PANTHER" id="PTHR12919:SF20">
    <property type="entry name" value="SMALL RIBOSOMAL SUBUNIT PROTEIN BS16M"/>
    <property type="match status" value="1"/>
</dbReference>
<dbReference type="Pfam" id="PF00886">
    <property type="entry name" value="Ribosomal_S16"/>
    <property type="match status" value="1"/>
</dbReference>
<dbReference type="SUPFAM" id="SSF54565">
    <property type="entry name" value="Ribosomal protein S16"/>
    <property type="match status" value="1"/>
</dbReference>
<organism>
    <name type="scientific">Listeria monocytogenes serotype 4b (strain CLIP80459)</name>
    <dbReference type="NCBI Taxonomy" id="568819"/>
    <lineage>
        <taxon>Bacteria</taxon>
        <taxon>Bacillati</taxon>
        <taxon>Bacillota</taxon>
        <taxon>Bacilli</taxon>
        <taxon>Bacillales</taxon>
        <taxon>Listeriaceae</taxon>
        <taxon>Listeria</taxon>
    </lineage>
</organism>
<name>RS16_LISMC</name>
<feature type="chain" id="PRO_1000205766" description="Small ribosomal subunit protein bS16">
    <location>
        <begin position="1"/>
        <end position="90"/>
    </location>
</feature>
<protein>
    <recommendedName>
        <fullName evidence="1">Small ribosomal subunit protein bS16</fullName>
    </recommendedName>
    <alternativeName>
        <fullName evidence="2">30S ribosomal protein S16</fullName>
    </alternativeName>
</protein>